<keyword id="KW-0106">Calcium</keyword>
<keyword id="KW-1015">Disulfide bond</keyword>
<keyword id="KW-0325">Glycoprotein</keyword>
<keyword id="KW-0472">Membrane</keyword>
<keyword id="KW-0479">Metal-binding</keyword>
<keyword id="KW-0675">Receptor</keyword>
<keyword id="KW-1185">Reference proteome</keyword>
<keyword id="KW-0735">Signal-anchor</keyword>
<keyword id="KW-0812">Transmembrane</keyword>
<keyword id="KW-1133">Transmembrane helix</keyword>
<keyword id="KW-0832">Ubl conjugation</keyword>
<evidence type="ECO:0000250" key="1"/>
<evidence type="ECO:0000255" key="2"/>
<evidence type="ECO:0000255" key="3">
    <source>
        <dbReference type="PROSITE-ProRule" id="PRU01172"/>
    </source>
</evidence>
<evidence type="ECO:0000256" key="4">
    <source>
        <dbReference type="SAM" id="MobiDB-lite"/>
    </source>
</evidence>
<evidence type="ECO:0000269" key="5">
    <source>
    </source>
</evidence>
<evidence type="ECO:0000305" key="6"/>
<feature type="chain" id="PRO_0000162507" description="Neuronal pentraxin receptor">
    <location>
        <begin position="1"/>
        <end position="493"/>
    </location>
</feature>
<feature type="topological domain" description="Cytoplasmic" evidence="2">
    <location>
        <begin position="1"/>
        <end position="2"/>
    </location>
</feature>
<feature type="transmembrane region" description="Helical; Signal-anchor for type II membrane protein" evidence="2">
    <location>
        <begin position="3"/>
        <end position="23"/>
    </location>
</feature>
<feature type="topological domain" description="Extracellular" evidence="2">
    <location>
        <begin position="24"/>
        <end position="493"/>
    </location>
</feature>
<feature type="domain" description="Pentraxin (PTX)" evidence="3">
    <location>
        <begin position="285"/>
        <end position="487"/>
    </location>
</feature>
<feature type="region of interest" description="Disordered" evidence="4">
    <location>
        <begin position="37"/>
        <end position="72"/>
    </location>
</feature>
<feature type="compositionally biased region" description="Low complexity" evidence="4">
    <location>
        <begin position="57"/>
        <end position="72"/>
    </location>
</feature>
<feature type="binding site" evidence="1">
    <location>
        <position position="340"/>
    </location>
    <ligand>
        <name>Ca(2+)</name>
        <dbReference type="ChEBI" id="CHEBI:29108"/>
        <label>1</label>
    </ligand>
</feature>
<feature type="binding site" evidence="1">
    <location>
        <position position="418"/>
    </location>
    <ligand>
        <name>Ca(2+)</name>
        <dbReference type="ChEBI" id="CHEBI:29108"/>
        <label>1</label>
    </ligand>
</feature>
<feature type="binding site" evidence="3">
    <location>
        <position position="418"/>
    </location>
    <ligand>
        <name>Ca(2+)</name>
        <dbReference type="ChEBI" id="CHEBI:29108"/>
        <label>2</label>
    </ligand>
</feature>
<feature type="binding site" evidence="1">
    <location>
        <position position="419"/>
    </location>
    <ligand>
        <name>Ca(2+)</name>
        <dbReference type="ChEBI" id="CHEBI:29108"/>
        <label>1</label>
    </ligand>
</feature>
<feature type="binding site" evidence="1">
    <location>
        <position position="420"/>
    </location>
    <ligand>
        <name>Ca(2+)</name>
        <dbReference type="ChEBI" id="CHEBI:29108"/>
        <label>1</label>
    </ligand>
</feature>
<feature type="binding site" evidence="3">
    <location>
        <position position="420"/>
    </location>
    <ligand>
        <name>Ca(2+)</name>
        <dbReference type="ChEBI" id="CHEBI:29108"/>
        <label>2</label>
    </ligand>
</feature>
<feature type="binding site" evidence="3">
    <location>
        <position position="430"/>
    </location>
    <ligand>
        <name>Ca(2+)</name>
        <dbReference type="ChEBI" id="CHEBI:29108"/>
        <label>2</label>
    </ligand>
</feature>
<feature type="glycosylation site" description="N-linked (GlcNAc...) asparagine" evidence="2">
    <location>
        <position position="42"/>
    </location>
</feature>
<feature type="glycosylation site" description="N-linked (GlcNAc...) asparagine" evidence="2">
    <location>
        <position position="211"/>
    </location>
</feature>
<feature type="glycosylation site" description="N-linked (GlcNAc...) asparagine" evidence="2">
    <location>
        <position position="456"/>
    </location>
</feature>
<feature type="disulfide bond" evidence="3">
    <location>
        <begin position="315"/>
        <end position="376"/>
    </location>
</feature>
<protein>
    <recommendedName>
        <fullName>Neuronal pentraxin receptor</fullName>
    </recommendedName>
</protein>
<name>NPTXR_MOUSE</name>
<gene>
    <name type="primary">Nptxr</name>
    <name type="synonym">Npr</name>
</gene>
<dbReference type="EMBL" id="AF316612">
    <property type="protein sequence ID" value="AAK11300.1"/>
    <property type="molecule type" value="mRNA"/>
</dbReference>
<dbReference type="EMBL" id="AF318076">
    <property type="protein sequence ID" value="AAK06717.1"/>
    <property type="molecule type" value="Genomic_DNA"/>
</dbReference>
<dbReference type="CCDS" id="CCDS27653.1"/>
<dbReference type="SMR" id="Q99J85"/>
<dbReference type="FunCoup" id="Q99J85">
    <property type="interactions" value="265"/>
</dbReference>
<dbReference type="IntAct" id="Q99J85">
    <property type="interactions" value="2"/>
</dbReference>
<dbReference type="MINT" id="Q99J85"/>
<dbReference type="STRING" id="10090.ENSMUSP00000023057"/>
<dbReference type="GlyConnect" id="2554">
    <property type="glycosylation" value="4 N-Linked glycans (2 sites)"/>
</dbReference>
<dbReference type="GlyCosmos" id="Q99J85">
    <property type="glycosylation" value="3 sites, 4 glycans"/>
</dbReference>
<dbReference type="GlyGen" id="Q99J85">
    <property type="glycosylation" value="3 sites, 6 N-linked glycans (2 sites)"/>
</dbReference>
<dbReference type="iPTMnet" id="Q99J85"/>
<dbReference type="PhosphoSitePlus" id="Q99J85"/>
<dbReference type="SwissPalm" id="Q99J85"/>
<dbReference type="PaxDb" id="10090-ENSMUSP00000023057"/>
<dbReference type="ProteomicsDB" id="253099"/>
<dbReference type="Pumba" id="Q99J85"/>
<dbReference type="AGR" id="MGI:1920590"/>
<dbReference type="MGI" id="MGI:1920590">
    <property type="gene designation" value="Nptxr"/>
</dbReference>
<dbReference type="eggNOG" id="ENOG502RCVB">
    <property type="taxonomic scope" value="Eukaryota"/>
</dbReference>
<dbReference type="InParanoid" id="Q99J85"/>
<dbReference type="PRO" id="PR:Q99J85"/>
<dbReference type="Proteomes" id="UP000000589">
    <property type="component" value="Unplaced"/>
</dbReference>
<dbReference type="RNAct" id="Q99J85">
    <property type="molecule type" value="protein"/>
</dbReference>
<dbReference type="GO" id="GO:0098978">
    <property type="term" value="C:glutamatergic synapse"/>
    <property type="evidence" value="ECO:0000314"/>
    <property type="project" value="SynGO"/>
</dbReference>
<dbReference type="GO" id="GO:0005886">
    <property type="term" value="C:plasma membrane"/>
    <property type="evidence" value="ECO:0000314"/>
    <property type="project" value="UniProtKB"/>
</dbReference>
<dbReference type="GO" id="GO:0046872">
    <property type="term" value="F:metal ion binding"/>
    <property type="evidence" value="ECO:0007669"/>
    <property type="project" value="UniProtKB-KW"/>
</dbReference>
<dbReference type="GO" id="GO:0019903">
    <property type="term" value="F:protein phosphatase binding"/>
    <property type="evidence" value="ECO:0000353"/>
    <property type="project" value="UniProtKB"/>
</dbReference>
<dbReference type="GO" id="GO:0031175">
    <property type="term" value="P:neuron projection development"/>
    <property type="evidence" value="ECO:0000315"/>
    <property type="project" value="UniProtKB"/>
</dbReference>
<dbReference type="GO" id="GO:0099645">
    <property type="term" value="P:neurotransmitter receptor localization to postsynaptic specialization membrane"/>
    <property type="evidence" value="ECO:0000314"/>
    <property type="project" value="SynGO"/>
</dbReference>
<dbReference type="GO" id="GO:0099150">
    <property type="term" value="P:regulation of postsynaptic specialization assembly"/>
    <property type="evidence" value="ECO:0000314"/>
    <property type="project" value="SynGO"/>
</dbReference>
<dbReference type="CDD" id="cd00152">
    <property type="entry name" value="PTX"/>
    <property type="match status" value="1"/>
</dbReference>
<dbReference type="FunFam" id="2.60.120.200:FF:000012">
    <property type="entry name" value="neuronal pentraxin receptor"/>
    <property type="match status" value="1"/>
</dbReference>
<dbReference type="Gene3D" id="2.60.120.200">
    <property type="match status" value="1"/>
</dbReference>
<dbReference type="InterPro" id="IPR013320">
    <property type="entry name" value="ConA-like_dom_sf"/>
</dbReference>
<dbReference type="InterPro" id="IPR051360">
    <property type="entry name" value="Neuronal_Pentraxin_Related"/>
</dbReference>
<dbReference type="InterPro" id="IPR030476">
    <property type="entry name" value="Pentaxin_CS"/>
</dbReference>
<dbReference type="InterPro" id="IPR001759">
    <property type="entry name" value="Pentraxin-related"/>
</dbReference>
<dbReference type="PANTHER" id="PTHR19277:SF94">
    <property type="entry name" value="NEURONAL PENTRAXIN RECEPTOR"/>
    <property type="match status" value="1"/>
</dbReference>
<dbReference type="PANTHER" id="PTHR19277">
    <property type="entry name" value="PENTRAXIN"/>
    <property type="match status" value="1"/>
</dbReference>
<dbReference type="Pfam" id="PF00354">
    <property type="entry name" value="Pentaxin"/>
    <property type="match status" value="1"/>
</dbReference>
<dbReference type="PRINTS" id="PR00895">
    <property type="entry name" value="PENTAXIN"/>
</dbReference>
<dbReference type="SMART" id="SM00159">
    <property type="entry name" value="PTX"/>
    <property type="match status" value="1"/>
</dbReference>
<dbReference type="SUPFAM" id="SSF49899">
    <property type="entry name" value="Concanavalin A-like lectins/glucanases"/>
    <property type="match status" value="1"/>
</dbReference>
<dbReference type="PROSITE" id="PS00289">
    <property type="entry name" value="PTX_1"/>
    <property type="match status" value="1"/>
</dbReference>
<dbReference type="PROSITE" id="PS51828">
    <property type="entry name" value="PTX_2"/>
    <property type="match status" value="1"/>
</dbReference>
<proteinExistence type="evidence at protein level"/>
<organism>
    <name type="scientific">Mus musculus</name>
    <name type="common">Mouse</name>
    <dbReference type="NCBI Taxonomy" id="10090"/>
    <lineage>
        <taxon>Eukaryota</taxon>
        <taxon>Metazoa</taxon>
        <taxon>Chordata</taxon>
        <taxon>Craniata</taxon>
        <taxon>Vertebrata</taxon>
        <taxon>Euteleostomi</taxon>
        <taxon>Mammalia</taxon>
        <taxon>Eutheria</taxon>
        <taxon>Euarchontoglires</taxon>
        <taxon>Glires</taxon>
        <taxon>Rodentia</taxon>
        <taxon>Myomorpha</taxon>
        <taxon>Muroidea</taxon>
        <taxon>Muridae</taxon>
        <taxon>Murinae</taxon>
        <taxon>Mus</taxon>
        <taxon>Mus</taxon>
    </lineage>
</organism>
<sequence>MKFLAVLLAAGMLAFLGAVICIIASVPLAASPARALPGGTDNASAASAAGGSGPQRSLSALHSAGGSAGPSVLPGEPAASVFPPPPVPLLSRFLCTPLAAACPSGAEQGDAAGERAELLLLQSTAEQLRQTALQQEARIRADRDTIRELTGKLGRCESGLPRGLQDAGPRRDTMADGAWDSPALLLELEDAVRALRDRIERIEQELPARGNLSSAPAPAMPTALHSKMDELECQLLAKVLALEKERAALSHGSHQQRQEVEKELNALQGRVAELEHGSSAYSPPDAFKVSIPIRNNYMYARVRKALPELYAFTACMCVRSRSGGSGQGTPFSYSVPGQANEIVLLEAGLEPMELLINDKVAQLPLSLKDSNWHHICISWTTRDGLWSAYQDGELRGSGENLAAWHPIKPHGILILGQEQDTLGGRFDATQAFVGDIAQFNLWDHALTPAQVLGMANCTGPLMGNVLPWEDKLVEAFGGAKKAAFDVCKGRAKA</sequence>
<reference key="1">
    <citation type="submission" date="2000-11" db="EMBL/GenBank/DDBJ databases">
        <title>Mouse neuronal pentraxin receptor.</title>
        <authorList>
            <person name="Perin M.S."/>
        </authorList>
    </citation>
    <scope>NUCLEOTIDE SEQUENCE [GENOMIC DNA / MRNA]</scope>
    <source>
        <strain>C57BL/6J</strain>
    </source>
</reference>
<reference key="2">
    <citation type="journal article" date="2010" name="Cell">
        <title>A tissue-specific atlas of mouse protein phosphorylation and expression.</title>
        <authorList>
            <person name="Huttlin E.L."/>
            <person name="Jedrychowski M.P."/>
            <person name="Elias J.E."/>
            <person name="Goswami T."/>
            <person name="Rad R."/>
            <person name="Beausoleil S.A."/>
            <person name="Villen J."/>
            <person name="Haas W."/>
            <person name="Sowa M.E."/>
            <person name="Gygi S.P."/>
        </authorList>
    </citation>
    <scope>IDENTIFICATION BY MASS SPECTROMETRY [LARGE SCALE ANALYSIS]</scope>
    <source>
        <tissue>Brain</tissue>
    </source>
</reference>
<reference key="3">
    <citation type="journal article" date="2011" name="Mol. Cell. Neurosci.">
        <title>Interaction of an intracellular pentraxin with a BTB-Kelch protein is associated with ubiquitylation, aggregation and neuronal apoptosis.</title>
        <authorList>
            <person name="Tseng L.A."/>
            <person name="Bixby J.L."/>
        </authorList>
    </citation>
    <scope>INTERACTION WITH KLHL2</scope>
    <scope>UBIQUITINATION</scope>
</reference>
<accession>Q99J85</accession>
<comment type="function">
    <text evidence="1">May be involved in mediating uptake of synaptic material during synapse remodeling or in mediating the synaptic clustering of AMPA glutamate receptors at a subset of excitatory synapses.</text>
</comment>
<comment type="cofactor">
    <cofactor evidence="1">
        <name>Ca(2+)</name>
        <dbReference type="ChEBI" id="CHEBI:29108"/>
    </cofactor>
    <text evidence="1">Binds 2 calcium ions per subunit.</text>
</comment>
<comment type="subunit">
    <text evidence="1 5">Heteropentamer with NPTX1 and/or NPTX2. Also binds taipoxin-associated calcium-binding protein 49 (TCBP49/RCN2) (By similarity). Interacts with KLHL2.</text>
</comment>
<comment type="subcellular location">
    <subcellularLocation>
        <location evidence="6">Membrane</location>
        <topology evidence="6">Single-pass type II membrane protein</topology>
    </subcellularLocation>
</comment>
<comment type="PTM">
    <text evidence="5">Ubiquitinated by a cullin-RING-based BCR (BTB-CUL3-RBX1) E3 ubiquitin-protein ligase complex containing KLHL2.</text>
</comment>